<name>RIP2_BRYDI</name>
<protein>
    <recommendedName>
        <fullName>Ribosome-inactivating protein bryodin II</fullName>
        <ecNumber>3.2.2.22</ecNumber>
    </recommendedName>
    <alternativeName>
        <fullName>BD2</fullName>
    </alternativeName>
    <alternativeName>
        <fullName>rRNA N-glycosidase</fullName>
    </alternativeName>
</protein>
<evidence type="ECO:0000250" key="1"/>
<evidence type="ECO:0000255" key="2"/>
<evidence type="ECO:0000269" key="3">
    <source>
    </source>
</evidence>
<evidence type="ECO:0000305" key="4"/>
<feature type="signal peptide" evidence="3">
    <location>
        <begin position="1"/>
        <end position="21"/>
    </location>
</feature>
<feature type="chain" id="PRO_0000030756" description="Ribosome-inactivating protein bryodin II">
    <location>
        <begin position="22"/>
        <end position="282"/>
    </location>
</feature>
<feature type="active site" evidence="1">
    <location>
        <position position="183"/>
    </location>
</feature>
<feature type="glycosylation site" description="N-linked (GlcNAc...) asparagine" evidence="2">
    <location>
        <position position="25"/>
    </location>
</feature>
<sequence length="282" mass="30754">MRSIGFYSVLALYVGAHVTEDVDINFSLIGATGATYKTFIRNLRTKLTVGTPRVYDIPVLRNAAAGLARFQLVTLTNYNGESVTVALDVVNVYVVAYRAGNTAYFLADASTEANNVLFAGINHVRLPYGGNYDGLETAAGRISRENIELGFSEISSAIGNMFRHNPGTSVPRAFIVIIQTVSEAARFKYIEQRVSENVGTKFKPDPAFLSLQNAWGSLSEQIQIAQTRGGEFARPVELRTVSNTPTFVTNVNSPVVKGIALLLYFRVNVGTDNVFAMSLSTY</sequence>
<organism>
    <name type="scientific">Bryonia dioica</name>
    <name type="common">Red bryony</name>
    <name type="synonym">Bryonia cretica subsp. dioica</name>
    <dbReference type="NCBI Taxonomy" id="3652"/>
    <lineage>
        <taxon>Eukaryota</taxon>
        <taxon>Viridiplantae</taxon>
        <taxon>Streptophyta</taxon>
        <taxon>Embryophyta</taxon>
        <taxon>Tracheophyta</taxon>
        <taxon>Spermatophyta</taxon>
        <taxon>Magnoliopsida</taxon>
        <taxon>eudicotyledons</taxon>
        <taxon>Gunneridae</taxon>
        <taxon>Pentapetalae</taxon>
        <taxon>rosids</taxon>
        <taxon>fabids</taxon>
        <taxon>Cucurbitales</taxon>
        <taxon>Cucurbitaceae</taxon>
        <taxon>Bryonieae</taxon>
        <taxon>Bryonia</taxon>
    </lineage>
</organism>
<keyword id="KW-0903">Direct protein sequencing</keyword>
<keyword id="KW-0325">Glycoprotein</keyword>
<keyword id="KW-0378">Hydrolase</keyword>
<keyword id="KW-0611">Plant defense</keyword>
<keyword id="KW-0652">Protein synthesis inhibitor</keyword>
<keyword id="KW-0732">Signal</keyword>
<keyword id="KW-0800">Toxin</keyword>
<proteinExistence type="evidence at protein level"/>
<dbReference type="EC" id="3.2.2.22"/>
<dbReference type="EMBL" id="I34238">
    <property type="status" value="NOT_ANNOTATED_CDS"/>
    <property type="molecule type" value="Unassigned_DNA"/>
</dbReference>
<dbReference type="SMR" id="P98184"/>
<dbReference type="GO" id="GO:0030598">
    <property type="term" value="F:rRNA N-glycosylase activity"/>
    <property type="evidence" value="ECO:0007669"/>
    <property type="project" value="UniProtKB-EC"/>
</dbReference>
<dbReference type="GO" id="GO:0090729">
    <property type="term" value="F:toxin activity"/>
    <property type="evidence" value="ECO:0007669"/>
    <property type="project" value="UniProtKB-KW"/>
</dbReference>
<dbReference type="GO" id="GO:0006952">
    <property type="term" value="P:defense response"/>
    <property type="evidence" value="ECO:0007669"/>
    <property type="project" value="UniProtKB-KW"/>
</dbReference>
<dbReference type="GO" id="GO:0017148">
    <property type="term" value="P:negative regulation of translation"/>
    <property type="evidence" value="ECO:0007669"/>
    <property type="project" value="UniProtKB-KW"/>
</dbReference>
<dbReference type="Gene3D" id="3.40.420.10">
    <property type="entry name" value="Ricin (A subunit), domain 1"/>
    <property type="match status" value="1"/>
</dbReference>
<dbReference type="Gene3D" id="4.10.470.10">
    <property type="entry name" value="Ricin (A Subunit), domain 2"/>
    <property type="match status" value="1"/>
</dbReference>
<dbReference type="InterPro" id="IPR036041">
    <property type="entry name" value="Ribosome-inact_prot_sf"/>
</dbReference>
<dbReference type="InterPro" id="IPR017989">
    <property type="entry name" value="Ribosome_inactivat_1/2"/>
</dbReference>
<dbReference type="InterPro" id="IPR001574">
    <property type="entry name" value="Ribosome_inactivat_prot"/>
</dbReference>
<dbReference type="InterPro" id="IPR017988">
    <property type="entry name" value="Ribosome_inactivat_prot_CS"/>
</dbReference>
<dbReference type="InterPro" id="IPR016138">
    <property type="entry name" value="Ribosome_inactivat_prot_sub1"/>
</dbReference>
<dbReference type="InterPro" id="IPR016139">
    <property type="entry name" value="Ribosome_inactivat_prot_sub2"/>
</dbReference>
<dbReference type="PANTHER" id="PTHR33453">
    <property type="match status" value="1"/>
</dbReference>
<dbReference type="PANTHER" id="PTHR33453:SF34">
    <property type="entry name" value="RIBOSOME-INACTIVATING PROTEIN"/>
    <property type="match status" value="1"/>
</dbReference>
<dbReference type="Pfam" id="PF00161">
    <property type="entry name" value="RIP"/>
    <property type="match status" value="1"/>
</dbReference>
<dbReference type="PRINTS" id="PR00396">
    <property type="entry name" value="SHIGARICIN"/>
</dbReference>
<dbReference type="SUPFAM" id="SSF56371">
    <property type="entry name" value="Ribosome inactivating proteins (RIP)"/>
    <property type="match status" value="1"/>
</dbReference>
<dbReference type="PROSITE" id="PS00275">
    <property type="entry name" value="SHIGA_RICIN"/>
    <property type="match status" value="1"/>
</dbReference>
<comment type="function">
    <text evidence="1">Ribosome-inactivating protein of type 1, inhibits protein synthesis in animal cells.</text>
</comment>
<comment type="catalytic activity">
    <reaction>
        <text>Endohydrolysis of the N-glycosidic bond at one specific adenosine on the 28S rRNA.</text>
        <dbReference type="EC" id="3.2.2.22"/>
    </reaction>
</comment>
<comment type="similarity">
    <text evidence="4">Belongs to the ribosome-inactivating protein family. Type 1 RIP subfamily.</text>
</comment>
<accession>P98184</accession>
<accession>Q9S8J0</accession>
<reference key="1">
    <citation type="patent" date="1997-01-28" number="US5597569">
        <title>Bryodin 2 a ribosome-inactivating protein isolated from the plant Bryonia dioica.</title>
        <authorList>
            <person name="Siegall C.B."/>
            <person name="Gawlak S.L."/>
            <person name="Marquardt H."/>
        </authorList>
    </citation>
    <scope>NUCLEOTIDE SEQUENCE</scope>
</reference>
<reference key="2">
    <citation type="journal article" date="1994" name="Bioconj. Chem.">
        <title>Characterization of ribosome-inactivating proteins isolated from Bryonia dioica and their utility as carcinoma-reactive immunoconjugates.</title>
        <authorList>
            <person name="Siegall C.B."/>
            <person name="Gawlak S.L."/>
            <person name="Chace D."/>
            <person name="Wolff E.A."/>
            <person name="Mixan B."/>
            <person name="Marquardt H."/>
        </authorList>
    </citation>
    <scope>PROTEIN SEQUENCE OF 22-42</scope>
    <source>
        <tissue>Root</tissue>
    </source>
</reference>